<sequence>MKKNLLGFTLASLLFTTGSAVAAEYKIDKEGQHAFVNFRIQHLGYSWLYGTFKDFDGTFTFDEKNPSADKVNVTINTNSVDTNHAERDKHLRSAEFLNVAKFPQATFTSTSVKKEGDELDITGNLTLNGVTKPVTLEAKLMGQGDDPWGGKRAGFEAEGKIKLKDFNITTDLGPASQEVELIISVEGVQQK</sequence>
<protein>
    <recommendedName>
        <fullName evidence="1">Protein YceI</fullName>
    </recommendedName>
</protein>
<dbReference type="EMBL" id="AM933172">
    <property type="protein sequence ID" value="CAR33471.1"/>
    <property type="molecule type" value="Genomic_DNA"/>
</dbReference>
<dbReference type="RefSeq" id="WP_000739886.1">
    <property type="nucleotide sequence ID" value="NC_011294.1"/>
</dbReference>
<dbReference type="SMR" id="B5QY08"/>
<dbReference type="KEGG" id="set:SEN1891"/>
<dbReference type="HOGENOM" id="CLU_071003_1_2_6"/>
<dbReference type="Proteomes" id="UP000000613">
    <property type="component" value="Chromosome"/>
</dbReference>
<dbReference type="GO" id="GO:0042597">
    <property type="term" value="C:periplasmic space"/>
    <property type="evidence" value="ECO:0007669"/>
    <property type="project" value="UniProtKB-SubCell"/>
</dbReference>
<dbReference type="Gene3D" id="2.40.128.110">
    <property type="entry name" value="Lipid/polyisoprenoid-binding, YceI-like"/>
    <property type="match status" value="1"/>
</dbReference>
<dbReference type="HAMAP" id="MF_00780">
    <property type="entry name" value="UPF0312"/>
    <property type="match status" value="1"/>
</dbReference>
<dbReference type="InterPro" id="IPR007372">
    <property type="entry name" value="Lipid/polyisoprenoid-bd_YceI"/>
</dbReference>
<dbReference type="InterPro" id="IPR036761">
    <property type="entry name" value="TTHA0802/YceI-like_sf"/>
</dbReference>
<dbReference type="InterPro" id="IPR023480">
    <property type="entry name" value="UPF0312/YceI"/>
</dbReference>
<dbReference type="NCBIfam" id="NF002994">
    <property type="entry name" value="PRK03757.1"/>
    <property type="match status" value="1"/>
</dbReference>
<dbReference type="PANTHER" id="PTHR34406">
    <property type="entry name" value="PROTEIN YCEI"/>
    <property type="match status" value="1"/>
</dbReference>
<dbReference type="PANTHER" id="PTHR34406:SF1">
    <property type="entry name" value="PROTEIN YCEI"/>
    <property type="match status" value="1"/>
</dbReference>
<dbReference type="Pfam" id="PF04264">
    <property type="entry name" value="YceI"/>
    <property type="match status" value="1"/>
</dbReference>
<dbReference type="SMART" id="SM00867">
    <property type="entry name" value="YceI"/>
    <property type="match status" value="1"/>
</dbReference>
<dbReference type="SUPFAM" id="SSF101874">
    <property type="entry name" value="YceI-like"/>
    <property type="match status" value="1"/>
</dbReference>
<feature type="signal peptide" evidence="1">
    <location>
        <begin position="1"/>
        <end position="22"/>
    </location>
</feature>
<feature type="chain" id="PRO_5000397425" description="Protein YceI">
    <location>
        <begin position="23"/>
        <end position="191"/>
    </location>
</feature>
<organism>
    <name type="scientific">Salmonella enteritidis PT4 (strain P125109)</name>
    <dbReference type="NCBI Taxonomy" id="550537"/>
    <lineage>
        <taxon>Bacteria</taxon>
        <taxon>Pseudomonadati</taxon>
        <taxon>Pseudomonadota</taxon>
        <taxon>Gammaproteobacteria</taxon>
        <taxon>Enterobacterales</taxon>
        <taxon>Enterobacteriaceae</taxon>
        <taxon>Salmonella</taxon>
    </lineage>
</organism>
<comment type="subcellular location">
    <subcellularLocation>
        <location evidence="1">Periplasm</location>
    </subcellularLocation>
</comment>
<comment type="similarity">
    <text evidence="1">Belongs to the UPF0312 family. Type 1 subfamily.</text>
</comment>
<reference key="1">
    <citation type="journal article" date="2008" name="Genome Res.">
        <title>Comparative genome analysis of Salmonella enteritidis PT4 and Salmonella gallinarum 287/91 provides insights into evolutionary and host adaptation pathways.</title>
        <authorList>
            <person name="Thomson N.R."/>
            <person name="Clayton D.J."/>
            <person name="Windhorst D."/>
            <person name="Vernikos G."/>
            <person name="Davidson S."/>
            <person name="Churcher C."/>
            <person name="Quail M.A."/>
            <person name="Stevens M."/>
            <person name="Jones M.A."/>
            <person name="Watson M."/>
            <person name="Barron A."/>
            <person name="Layton A."/>
            <person name="Pickard D."/>
            <person name="Kingsley R.A."/>
            <person name="Bignell A."/>
            <person name="Clark L."/>
            <person name="Harris B."/>
            <person name="Ormond D."/>
            <person name="Abdellah Z."/>
            <person name="Brooks K."/>
            <person name="Cherevach I."/>
            <person name="Chillingworth T."/>
            <person name="Woodward J."/>
            <person name="Norberczak H."/>
            <person name="Lord A."/>
            <person name="Arrowsmith C."/>
            <person name="Jagels K."/>
            <person name="Moule S."/>
            <person name="Mungall K."/>
            <person name="Saunders M."/>
            <person name="Whitehead S."/>
            <person name="Chabalgoity J.A."/>
            <person name="Maskell D."/>
            <person name="Humphreys T."/>
            <person name="Roberts M."/>
            <person name="Barrow P.A."/>
            <person name="Dougan G."/>
            <person name="Parkhill J."/>
        </authorList>
    </citation>
    <scope>NUCLEOTIDE SEQUENCE [LARGE SCALE GENOMIC DNA]</scope>
    <source>
        <strain>P125109</strain>
    </source>
</reference>
<evidence type="ECO:0000255" key="1">
    <source>
        <dbReference type="HAMAP-Rule" id="MF_00780"/>
    </source>
</evidence>
<accession>B5QY08</accession>
<name>YCEI_SALEP</name>
<gene>
    <name evidence="1" type="primary">yceI</name>
    <name type="ordered locus">SEN1891</name>
</gene>
<keyword id="KW-0574">Periplasm</keyword>
<keyword id="KW-0732">Signal</keyword>
<proteinExistence type="inferred from homology"/>